<comment type="function">
    <text evidence="1">Binds the lower part of the 30S subunit head.</text>
</comment>
<comment type="subunit">
    <text evidence="1">Part of the 30S ribosomal subunit.</text>
</comment>
<comment type="similarity">
    <text evidence="1">Belongs to the universal ribosomal protein uS3 family.</text>
</comment>
<reference key="1">
    <citation type="journal article" date="2008" name="Genome Biol.">
        <title>A genomic analysis of the archaeal system Ignicoccus hospitalis-Nanoarchaeum equitans.</title>
        <authorList>
            <person name="Podar M."/>
            <person name="Anderson I."/>
            <person name="Makarova K.S."/>
            <person name="Elkins J.G."/>
            <person name="Ivanova N."/>
            <person name="Wall M.A."/>
            <person name="Lykidis A."/>
            <person name="Mavromatis K."/>
            <person name="Sun H."/>
            <person name="Hudson M.E."/>
            <person name="Chen W."/>
            <person name="Deciu C."/>
            <person name="Hutchison D."/>
            <person name="Eads J.R."/>
            <person name="Anderson A."/>
            <person name="Fernandes F."/>
            <person name="Szeto E."/>
            <person name="Lapidus A."/>
            <person name="Kyrpides N.C."/>
            <person name="Saier M.H. Jr."/>
            <person name="Richardson P.M."/>
            <person name="Rachel R."/>
            <person name="Huber H."/>
            <person name="Eisen J.A."/>
            <person name="Koonin E.V."/>
            <person name="Keller M."/>
            <person name="Stetter K.O."/>
        </authorList>
    </citation>
    <scope>NUCLEOTIDE SEQUENCE [LARGE SCALE GENOMIC DNA]</scope>
    <source>
        <strain>KIN4/I / DSM 18386 / JCM 14125</strain>
    </source>
</reference>
<accession>A8AA20</accession>
<proteinExistence type="inferred from homology"/>
<gene>
    <name evidence="1" type="primary">rps3</name>
    <name type="ordered locus">Igni_0590</name>
</gene>
<evidence type="ECO:0000255" key="1">
    <source>
        <dbReference type="HAMAP-Rule" id="MF_01309"/>
    </source>
</evidence>
<evidence type="ECO:0000256" key="2">
    <source>
        <dbReference type="SAM" id="MobiDB-lite"/>
    </source>
</evidence>
<evidence type="ECO:0000305" key="3"/>
<protein>
    <recommendedName>
        <fullName evidence="1">Small ribosomal subunit protein uS3</fullName>
    </recommendedName>
    <alternativeName>
        <fullName evidence="3">30S ribosomal protein S3</fullName>
    </alternativeName>
</protein>
<keyword id="KW-1185">Reference proteome</keyword>
<keyword id="KW-0687">Ribonucleoprotein</keyword>
<keyword id="KW-0689">Ribosomal protein</keyword>
<keyword id="KW-0694">RNA-binding</keyword>
<keyword id="KW-0699">rRNA-binding</keyword>
<feature type="chain" id="PRO_0000323311" description="Small ribosomal subunit protein uS3">
    <location>
        <begin position="1"/>
        <end position="241"/>
    </location>
</feature>
<feature type="domain" description="KH type-2" evidence="1">
    <location>
        <begin position="22"/>
        <end position="91"/>
    </location>
</feature>
<feature type="region of interest" description="Disordered" evidence="2">
    <location>
        <begin position="218"/>
        <end position="241"/>
    </location>
</feature>
<organism>
    <name type="scientific">Ignicoccus hospitalis (strain KIN4/I / DSM 18386 / JCM 14125)</name>
    <dbReference type="NCBI Taxonomy" id="453591"/>
    <lineage>
        <taxon>Archaea</taxon>
        <taxon>Thermoproteota</taxon>
        <taxon>Thermoprotei</taxon>
        <taxon>Desulfurococcales</taxon>
        <taxon>Desulfurococcaceae</taxon>
        <taxon>Ignicoccus</taxon>
    </lineage>
</organism>
<dbReference type="EMBL" id="CP000816">
    <property type="protein sequence ID" value="ABU81772.1"/>
    <property type="molecule type" value="Genomic_DNA"/>
</dbReference>
<dbReference type="SMR" id="A8AA20"/>
<dbReference type="STRING" id="453591.Igni_0590"/>
<dbReference type="KEGG" id="iho:Igni_0590"/>
<dbReference type="eggNOG" id="arCOG04097">
    <property type="taxonomic scope" value="Archaea"/>
</dbReference>
<dbReference type="HOGENOM" id="CLU_058591_1_1_2"/>
<dbReference type="OrthoDB" id="9126at2157"/>
<dbReference type="PhylomeDB" id="A8AA20"/>
<dbReference type="Proteomes" id="UP000000262">
    <property type="component" value="Chromosome"/>
</dbReference>
<dbReference type="GO" id="GO:0022627">
    <property type="term" value="C:cytosolic small ribosomal subunit"/>
    <property type="evidence" value="ECO:0007669"/>
    <property type="project" value="TreeGrafter"/>
</dbReference>
<dbReference type="GO" id="GO:0019843">
    <property type="term" value="F:rRNA binding"/>
    <property type="evidence" value="ECO:0007669"/>
    <property type="project" value="UniProtKB-UniRule"/>
</dbReference>
<dbReference type="GO" id="GO:0003735">
    <property type="term" value="F:structural constituent of ribosome"/>
    <property type="evidence" value="ECO:0007669"/>
    <property type="project" value="InterPro"/>
</dbReference>
<dbReference type="GO" id="GO:0006412">
    <property type="term" value="P:translation"/>
    <property type="evidence" value="ECO:0007669"/>
    <property type="project" value="UniProtKB-UniRule"/>
</dbReference>
<dbReference type="CDD" id="cd02411">
    <property type="entry name" value="KH-II_30S_S3_arch"/>
    <property type="match status" value="1"/>
</dbReference>
<dbReference type="FunFam" id="3.30.300.20:FF:000001">
    <property type="entry name" value="30S ribosomal protein S3"/>
    <property type="match status" value="1"/>
</dbReference>
<dbReference type="Gene3D" id="3.30.300.20">
    <property type="match status" value="1"/>
</dbReference>
<dbReference type="Gene3D" id="3.30.1140.32">
    <property type="entry name" value="Ribosomal protein S3, C-terminal domain"/>
    <property type="match status" value="1"/>
</dbReference>
<dbReference type="HAMAP" id="MF_01309_A">
    <property type="entry name" value="Ribosomal_uS3_A"/>
    <property type="match status" value="1"/>
</dbReference>
<dbReference type="InterPro" id="IPR004087">
    <property type="entry name" value="KH_dom"/>
</dbReference>
<dbReference type="InterPro" id="IPR015946">
    <property type="entry name" value="KH_dom-like_a/b"/>
</dbReference>
<dbReference type="InterPro" id="IPR004044">
    <property type="entry name" value="KH_dom_type_2"/>
</dbReference>
<dbReference type="InterPro" id="IPR009019">
    <property type="entry name" value="KH_sf_prok-type"/>
</dbReference>
<dbReference type="InterPro" id="IPR036419">
    <property type="entry name" value="Ribosomal_S3_C_sf"/>
</dbReference>
<dbReference type="InterPro" id="IPR027488">
    <property type="entry name" value="Ribosomal_uS3_arc"/>
</dbReference>
<dbReference type="InterPro" id="IPR001351">
    <property type="entry name" value="Ribosomal_uS3_C"/>
</dbReference>
<dbReference type="InterPro" id="IPR005703">
    <property type="entry name" value="Ribosomal_uS3_euk/arc"/>
</dbReference>
<dbReference type="NCBIfam" id="NF003219">
    <property type="entry name" value="PRK04191.1"/>
    <property type="match status" value="1"/>
</dbReference>
<dbReference type="NCBIfam" id="TIGR01008">
    <property type="entry name" value="uS3_euk_arch"/>
    <property type="match status" value="1"/>
</dbReference>
<dbReference type="PANTHER" id="PTHR11760">
    <property type="entry name" value="30S/40S RIBOSOMAL PROTEIN S3"/>
    <property type="match status" value="1"/>
</dbReference>
<dbReference type="PANTHER" id="PTHR11760:SF32">
    <property type="entry name" value="SMALL RIBOSOMAL SUBUNIT PROTEIN US3"/>
    <property type="match status" value="1"/>
</dbReference>
<dbReference type="Pfam" id="PF07650">
    <property type="entry name" value="KH_2"/>
    <property type="match status" value="1"/>
</dbReference>
<dbReference type="Pfam" id="PF00189">
    <property type="entry name" value="Ribosomal_S3_C"/>
    <property type="match status" value="1"/>
</dbReference>
<dbReference type="SMART" id="SM00322">
    <property type="entry name" value="KH"/>
    <property type="match status" value="1"/>
</dbReference>
<dbReference type="SUPFAM" id="SSF54814">
    <property type="entry name" value="Prokaryotic type KH domain (KH-domain type II)"/>
    <property type="match status" value="1"/>
</dbReference>
<dbReference type="SUPFAM" id="SSF54821">
    <property type="entry name" value="Ribosomal protein S3 C-terminal domain"/>
    <property type="match status" value="1"/>
</dbReference>
<dbReference type="PROSITE" id="PS50823">
    <property type="entry name" value="KH_TYPE_2"/>
    <property type="match status" value="1"/>
</dbReference>
<sequence length="241" mass="27245">MSVAKKNIKKYFLEQALTQVKVDEYLAYKFHSVGYSKVELQKTPMGTRVIIYAERSGAIIGRRGQTIKQITKVLEEWFGIPNPQVTVVKVEEPELDARVMAFRLANALQRGFHFRRAAYTTLRRIMGAGAIGAQVKVSGKLRGERARFEKYIAGKVYKSGNQVVRLTDRAIAHVLLKVGVEGVEVIISKKSEEERPDDEVRIKSPEEVNEIVQKIREEMQQTQPEAPTLEETVEQSGGETQ</sequence>
<name>RS3_IGNH4</name>